<reference key="1">
    <citation type="journal article" date="2005" name="Nature">
        <title>Generation and annotation of the DNA sequences of human chromosomes 2 and 4.</title>
        <authorList>
            <person name="Hillier L.W."/>
            <person name="Graves T.A."/>
            <person name="Fulton R.S."/>
            <person name="Fulton L.A."/>
            <person name="Pepin K.H."/>
            <person name="Minx P."/>
            <person name="Wagner-McPherson C."/>
            <person name="Layman D."/>
            <person name="Wylie K."/>
            <person name="Sekhon M."/>
            <person name="Becker M.C."/>
            <person name="Fewell G.A."/>
            <person name="Delehaunty K.D."/>
            <person name="Miner T.L."/>
            <person name="Nash W.E."/>
            <person name="Kremitzki C."/>
            <person name="Oddy L."/>
            <person name="Du H."/>
            <person name="Sun H."/>
            <person name="Bradshaw-Cordum H."/>
            <person name="Ali J."/>
            <person name="Carter J."/>
            <person name="Cordes M."/>
            <person name="Harris A."/>
            <person name="Isak A."/>
            <person name="van Brunt A."/>
            <person name="Nguyen C."/>
            <person name="Du F."/>
            <person name="Courtney L."/>
            <person name="Kalicki J."/>
            <person name="Ozersky P."/>
            <person name="Abbott S."/>
            <person name="Armstrong J."/>
            <person name="Belter E.A."/>
            <person name="Caruso L."/>
            <person name="Cedroni M."/>
            <person name="Cotton M."/>
            <person name="Davidson T."/>
            <person name="Desai A."/>
            <person name="Elliott G."/>
            <person name="Erb T."/>
            <person name="Fronick C."/>
            <person name="Gaige T."/>
            <person name="Haakenson W."/>
            <person name="Haglund K."/>
            <person name="Holmes A."/>
            <person name="Harkins R."/>
            <person name="Kim K."/>
            <person name="Kruchowski S.S."/>
            <person name="Strong C.M."/>
            <person name="Grewal N."/>
            <person name="Goyea E."/>
            <person name="Hou S."/>
            <person name="Levy A."/>
            <person name="Martinka S."/>
            <person name="Mead K."/>
            <person name="McLellan M.D."/>
            <person name="Meyer R."/>
            <person name="Randall-Maher J."/>
            <person name="Tomlinson C."/>
            <person name="Dauphin-Kohlberg S."/>
            <person name="Kozlowicz-Reilly A."/>
            <person name="Shah N."/>
            <person name="Swearengen-Shahid S."/>
            <person name="Snider J."/>
            <person name="Strong J.T."/>
            <person name="Thompson J."/>
            <person name="Yoakum M."/>
            <person name="Leonard S."/>
            <person name="Pearman C."/>
            <person name="Trani L."/>
            <person name="Radionenko M."/>
            <person name="Waligorski J.E."/>
            <person name="Wang C."/>
            <person name="Rock S.M."/>
            <person name="Tin-Wollam A.-M."/>
            <person name="Maupin R."/>
            <person name="Latreille P."/>
            <person name="Wendl M.C."/>
            <person name="Yang S.-P."/>
            <person name="Pohl C."/>
            <person name="Wallis J.W."/>
            <person name="Spieth J."/>
            <person name="Bieri T.A."/>
            <person name="Berkowicz N."/>
            <person name="Nelson J.O."/>
            <person name="Osborne J."/>
            <person name="Ding L."/>
            <person name="Meyer R."/>
            <person name="Sabo A."/>
            <person name="Shotland Y."/>
            <person name="Sinha P."/>
            <person name="Wohldmann P.E."/>
            <person name="Cook L.L."/>
            <person name="Hickenbotham M.T."/>
            <person name="Eldred J."/>
            <person name="Williams D."/>
            <person name="Jones T.A."/>
            <person name="She X."/>
            <person name="Ciccarelli F.D."/>
            <person name="Izaurralde E."/>
            <person name="Taylor J."/>
            <person name="Schmutz J."/>
            <person name="Myers R.M."/>
            <person name="Cox D.R."/>
            <person name="Huang X."/>
            <person name="McPherson J.D."/>
            <person name="Mardis E.R."/>
            <person name="Clifton S.W."/>
            <person name="Warren W.C."/>
            <person name="Chinwalla A.T."/>
            <person name="Eddy S.R."/>
            <person name="Marra M.A."/>
            <person name="Ovcharenko I."/>
            <person name="Furey T.S."/>
            <person name="Miller W."/>
            <person name="Eichler E.E."/>
            <person name="Bork P."/>
            <person name="Suyama M."/>
            <person name="Torrents D."/>
            <person name="Waterston R.H."/>
            <person name="Wilson R.K."/>
        </authorList>
    </citation>
    <scope>NUCLEOTIDE SEQUENCE [LARGE SCALE GENOMIC DNA]</scope>
</reference>
<reference key="2">
    <citation type="submission" date="2005-09" db="EMBL/GenBank/DDBJ databases">
        <authorList>
            <person name="Mural R.J."/>
            <person name="Istrail S."/>
            <person name="Sutton G.G."/>
            <person name="Florea L."/>
            <person name="Halpern A.L."/>
            <person name="Mobarry C.M."/>
            <person name="Lippert R."/>
            <person name="Walenz B."/>
            <person name="Shatkay H."/>
            <person name="Dew I."/>
            <person name="Miller J.R."/>
            <person name="Flanigan M.J."/>
            <person name="Edwards N.J."/>
            <person name="Bolanos R."/>
            <person name="Fasulo D."/>
            <person name="Halldorsson B.V."/>
            <person name="Hannenhalli S."/>
            <person name="Turner R."/>
            <person name="Yooseph S."/>
            <person name="Lu F."/>
            <person name="Nusskern D.R."/>
            <person name="Shue B.C."/>
            <person name="Zheng X.H."/>
            <person name="Zhong F."/>
            <person name="Delcher A.L."/>
            <person name="Huson D.H."/>
            <person name="Kravitz S.A."/>
            <person name="Mouchard L."/>
            <person name="Reinert K."/>
            <person name="Remington K.A."/>
            <person name="Clark A.G."/>
            <person name="Waterman M.S."/>
            <person name="Eichler E.E."/>
            <person name="Adams M.D."/>
            <person name="Hunkapiller M.W."/>
            <person name="Myers E.W."/>
            <person name="Venter J.C."/>
        </authorList>
    </citation>
    <scope>NUCLEOTIDE SEQUENCE [LARGE SCALE GENOMIC DNA]</scope>
</reference>
<reference key="3">
    <citation type="journal article" date="2004" name="Genome Res.">
        <title>The status, quality, and expansion of the NIH full-length cDNA project: the Mammalian Gene Collection (MGC).</title>
        <authorList>
            <consortium name="The MGC Project Team"/>
        </authorList>
    </citation>
    <scope>NUCLEOTIDE SEQUENCE [LARGE SCALE MRNA]</scope>
</reference>
<reference key="4">
    <citation type="journal article" date="2001" name="J. Biol. Chem.">
        <title>The small subunit of the mammalian mitochondrial ribosome: identification of the full complement of ribosomal proteins present.</title>
        <authorList>
            <person name="Koc E.C."/>
            <person name="Burkhart W."/>
            <person name="Blackburn K."/>
            <person name="Moseley A."/>
            <person name="Spremulli L.L."/>
        </authorList>
    </citation>
    <scope>IDENTIFICATION</scope>
</reference>
<reference key="5">
    <citation type="journal article" date="2009" name="Science">
        <title>Lysine acetylation targets protein complexes and co-regulates major cellular functions.</title>
        <authorList>
            <person name="Choudhary C."/>
            <person name="Kumar C."/>
            <person name="Gnad F."/>
            <person name="Nielsen M.L."/>
            <person name="Rehman M."/>
            <person name="Walther T.C."/>
            <person name="Olsen J.V."/>
            <person name="Mann M."/>
        </authorList>
    </citation>
    <scope>ACETYLATION [LARGE SCALE ANALYSIS] AT LYS-287</scope>
    <scope>IDENTIFICATION BY MASS SPECTROMETRY [LARGE SCALE ANALYSIS]</scope>
</reference>
<reference key="6">
    <citation type="journal article" date="2011" name="BMC Syst. Biol.">
        <title>Initial characterization of the human central proteome.</title>
        <authorList>
            <person name="Burkard T.R."/>
            <person name="Planyavsky M."/>
            <person name="Kaupe I."/>
            <person name="Breitwieser F.P."/>
            <person name="Buerckstuemmer T."/>
            <person name="Bennett K.L."/>
            <person name="Superti-Furga G."/>
            <person name="Colinge J."/>
        </authorList>
    </citation>
    <scope>IDENTIFICATION BY MASS SPECTROMETRY [LARGE SCALE ANALYSIS]</scope>
</reference>
<reference key="7">
    <citation type="journal article" date="2014" name="J. Proteomics">
        <title>An enzyme assisted RP-RPLC approach for in-depth analysis of human liver phosphoproteome.</title>
        <authorList>
            <person name="Bian Y."/>
            <person name="Song C."/>
            <person name="Cheng K."/>
            <person name="Dong M."/>
            <person name="Wang F."/>
            <person name="Huang J."/>
            <person name="Sun D."/>
            <person name="Wang L."/>
            <person name="Ye M."/>
            <person name="Zou H."/>
        </authorList>
    </citation>
    <scope>IDENTIFICATION BY MASS SPECTROMETRY [LARGE SCALE ANALYSIS]</scope>
    <source>
        <tissue>Liver</tissue>
    </source>
</reference>
<reference key="8">
    <citation type="journal article" date="2015" name="Proteomics">
        <title>N-terminome analysis of the human mitochondrial proteome.</title>
        <authorList>
            <person name="Vaca Jacome A.S."/>
            <person name="Rabilloud T."/>
            <person name="Schaeffer-Reiss C."/>
            <person name="Rompais M."/>
            <person name="Ayoub D."/>
            <person name="Lane L."/>
            <person name="Bairoch A."/>
            <person name="Van Dorsselaer A."/>
            <person name="Carapito C."/>
        </authorList>
    </citation>
    <scope>IDENTIFICATION BY MASS SPECTROMETRY [LARGE SCALE ANALYSIS]</scope>
</reference>
<reference evidence="6" key="9">
    <citation type="journal article" date="2015" name="Science">
        <title>Ribosome. The structure of the human mitochondrial ribosome.</title>
        <authorList>
            <person name="Amunts A."/>
            <person name="Brown A."/>
            <person name="Toots J."/>
            <person name="Scheres S.H."/>
            <person name="Ramakrishnan V."/>
        </authorList>
    </citation>
    <scope>STRUCTURE BY ELECTRON MICROSCOPY (3.50 ANGSTROMS)</scope>
    <scope>SUBCELLULAR LOCATION</scope>
    <scope>SUBUNIT</scope>
</reference>
<evidence type="ECO:0000255" key="1"/>
<evidence type="ECO:0000256" key="2">
    <source>
        <dbReference type="SAM" id="MobiDB-lite"/>
    </source>
</evidence>
<evidence type="ECO:0000269" key="3">
    <source>
    </source>
</evidence>
<evidence type="ECO:0000303" key="4">
    <source>
    </source>
</evidence>
<evidence type="ECO:0000305" key="5"/>
<evidence type="ECO:0007744" key="6">
    <source>
        <dbReference type="PDB" id="3J9M"/>
    </source>
</evidence>
<evidence type="ECO:0007744" key="7">
    <source>
    </source>
</evidence>
<evidence type="ECO:0007829" key="8">
    <source>
        <dbReference type="PDB" id="8CSS"/>
    </source>
</evidence>
<evidence type="ECO:0007829" key="9">
    <source>
        <dbReference type="PDB" id="8QRN"/>
    </source>
</evidence>
<name>RT09_HUMAN</name>
<proteinExistence type="evidence at protein level"/>
<dbReference type="EMBL" id="AC010884">
    <property type="status" value="NOT_ANNOTATED_CDS"/>
    <property type="molecule type" value="Genomic_DNA"/>
</dbReference>
<dbReference type="EMBL" id="AC107080">
    <property type="status" value="NOT_ANNOTATED_CDS"/>
    <property type="molecule type" value="Genomic_DNA"/>
</dbReference>
<dbReference type="EMBL" id="AC104655">
    <property type="status" value="NOT_ANNOTATED_CDS"/>
    <property type="molecule type" value="Genomic_DNA"/>
</dbReference>
<dbReference type="EMBL" id="CH471127">
    <property type="protein sequence ID" value="EAX01767.1"/>
    <property type="molecule type" value="Genomic_DNA"/>
</dbReference>
<dbReference type="EMBL" id="BC057240">
    <property type="protein sequence ID" value="AAH57240.1"/>
    <property type="molecule type" value="mRNA"/>
</dbReference>
<dbReference type="CCDS" id="CCDS2065.1"/>
<dbReference type="RefSeq" id="NP_872578.1">
    <property type="nucleotide sequence ID" value="NM_182640.3"/>
</dbReference>
<dbReference type="PDB" id="3J9M">
    <property type="method" value="EM"/>
    <property type="resolution" value="3.50 A"/>
    <property type="chains" value="AG=1-396"/>
</dbReference>
<dbReference type="PDB" id="6NU2">
    <property type="method" value="EM"/>
    <property type="resolution" value="3.90 A"/>
    <property type="chains" value="AG=71-396"/>
</dbReference>
<dbReference type="PDB" id="6NU3">
    <property type="method" value="EM"/>
    <property type="resolution" value="4.40 A"/>
    <property type="chains" value="AG=1-396"/>
</dbReference>
<dbReference type="PDB" id="6RW4">
    <property type="method" value="EM"/>
    <property type="resolution" value="2.97 A"/>
    <property type="chains" value="G=1-396"/>
</dbReference>
<dbReference type="PDB" id="6RW5">
    <property type="method" value="EM"/>
    <property type="resolution" value="3.14 A"/>
    <property type="chains" value="G=1-396"/>
</dbReference>
<dbReference type="PDB" id="6VLZ">
    <property type="method" value="EM"/>
    <property type="resolution" value="2.97 A"/>
    <property type="chains" value="AG=1-396"/>
</dbReference>
<dbReference type="PDB" id="6VMI">
    <property type="method" value="EM"/>
    <property type="resolution" value="2.96 A"/>
    <property type="chains" value="AG=1-396"/>
</dbReference>
<dbReference type="PDB" id="6ZM5">
    <property type="method" value="EM"/>
    <property type="resolution" value="2.89 A"/>
    <property type="chains" value="AG=1-396"/>
</dbReference>
<dbReference type="PDB" id="6ZM6">
    <property type="method" value="EM"/>
    <property type="resolution" value="2.59 A"/>
    <property type="chains" value="AG=1-396"/>
</dbReference>
<dbReference type="PDB" id="6ZS9">
    <property type="method" value="EM"/>
    <property type="resolution" value="4.00 A"/>
    <property type="chains" value="AG=1-396"/>
</dbReference>
<dbReference type="PDB" id="6ZSA">
    <property type="method" value="EM"/>
    <property type="resolution" value="4.00 A"/>
    <property type="chains" value="AG=1-396"/>
</dbReference>
<dbReference type="PDB" id="6ZSB">
    <property type="method" value="EM"/>
    <property type="resolution" value="4.50 A"/>
    <property type="chains" value="AG=1-396"/>
</dbReference>
<dbReference type="PDB" id="6ZSC">
    <property type="method" value="EM"/>
    <property type="resolution" value="3.50 A"/>
    <property type="chains" value="AG=1-396"/>
</dbReference>
<dbReference type="PDB" id="6ZSD">
    <property type="method" value="EM"/>
    <property type="resolution" value="3.70 A"/>
    <property type="chains" value="AG=1-396"/>
</dbReference>
<dbReference type="PDB" id="6ZSE">
    <property type="method" value="EM"/>
    <property type="resolution" value="5.00 A"/>
    <property type="chains" value="AG=1-396"/>
</dbReference>
<dbReference type="PDB" id="6ZSG">
    <property type="method" value="EM"/>
    <property type="resolution" value="4.00 A"/>
    <property type="chains" value="AG=1-396"/>
</dbReference>
<dbReference type="PDB" id="7A5F">
    <property type="method" value="EM"/>
    <property type="resolution" value="4.40 A"/>
    <property type="chains" value="G6=1-396"/>
</dbReference>
<dbReference type="PDB" id="7A5G">
    <property type="method" value="EM"/>
    <property type="resolution" value="4.33 A"/>
    <property type="chains" value="G6=1-396"/>
</dbReference>
<dbReference type="PDB" id="7A5I">
    <property type="method" value="EM"/>
    <property type="resolution" value="3.70 A"/>
    <property type="chains" value="G6=1-396"/>
</dbReference>
<dbReference type="PDB" id="7A5K">
    <property type="method" value="EM"/>
    <property type="resolution" value="3.70 A"/>
    <property type="chains" value="G6=1-396"/>
</dbReference>
<dbReference type="PDB" id="7L08">
    <property type="method" value="EM"/>
    <property type="resolution" value="3.49 A"/>
    <property type="chains" value="AG=1-396"/>
</dbReference>
<dbReference type="PDB" id="7OG4">
    <property type="method" value="EM"/>
    <property type="resolution" value="3.80 A"/>
    <property type="chains" value="AG=1-396"/>
</dbReference>
<dbReference type="PDB" id="7P2E">
    <property type="method" value="EM"/>
    <property type="resolution" value="2.40 A"/>
    <property type="chains" value="G=1-396"/>
</dbReference>
<dbReference type="PDB" id="7PNX">
    <property type="method" value="EM"/>
    <property type="resolution" value="2.76 A"/>
    <property type="chains" value="G=1-396"/>
</dbReference>
<dbReference type="PDB" id="7PNY">
    <property type="method" value="EM"/>
    <property type="resolution" value="3.06 A"/>
    <property type="chains" value="G=1-396"/>
</dbReference>
<dbReference type="PDB" id="7PNZ">
    <property type="method" value="EM"/>
    <property type="resolution" value="3.09 A"/>
    <property type="chains" value="G=1-396"/>
</dbReference>
<dbReference type="PDB" id="7PO0">
    <property type="method" value="EM"/>
    <property type="resolution" value="2.90 A"/>
    <property type="chains" value="G=1-396"/>
</dbReference>
<dbReference type="PDB" id="7PO1">
    <property type="method" value="EM"/>
    <property type="resolution" value="2.92 A"/>
    <property type="chains" value="G=1-396"/>
</dbReference>
<dbReference type="PDB" id="7PO2">
    <property type="method" value="EM"/>
    <property type="resolution" value="3.09 A"/>
    <property type="chains" value="G=1-396"/>
</dbReference>
<dbReference type="PDB" id="7PO3">
    <property type="method" value="EM"/>
    <property type="resolution" value="2.92 A"/>
    <property type="chains" value="G=1-396"/>
</dbReference>
<dbReference type="PDB" id="7QI4">
    <property type="method" value="EM"/>
    <property type="resolution" value="2.21 A"/>
    <property type="chains" value="AG=1-396"/>
</dbReference>
<dbReference type="PDB" id="7QI5">
    <property type="method" value="EM"/>
    <property type="resolution" value="2.63 A"/>
    <property type="chains" value="AG=1-396"/>
</dbReference>
<dbReference type="PDB" id="7QI6">
    <property type="method" value="EM"/>
    <property type="resolution" value="2.98 A"/>
    <property type="chains" value="AG=1-396"/>
</dbReference>
<dbReference type="PDB" id="8ANY">
    <property type="method" value="EM"/>
    <property type="resolution" value="2.85 A"/>
    <property type="chains" value="AG=1-396"/>
</dbReference>
<dbReference type="PDB" id="8CSP">
    <property type="method" value="EM"/>
    <property type="resolution" value="2.66 A"/>
    <property type="chains" value="G=1-396"/>
</dbReference>
<dbReference type="PDB" id="8CSQ">
    <property type="method" value="EM"/>
    <property type="resolution" value="2.54 A"/>
    <property type="chains" value="G=1-396"/>
</dbReference>
<dbReference type="PDB" id="8CSR">
    <property type="method" value="EM"/>
    <property type="resolution" value="2.54 A"/>
    <property type="chains" value="G=1-396"/>
</dbReference>
<dbReference type="PDB" id="8CSS">
    <property type="method" value="EM"/>
    <property type="resolution" value="2.36 A"/>
    <property type="chains" value="G=1-396"/>
</dbReference>
<dbReference type="PDB" id="8CST">
    <property type="method" value="EM"/>
    <property type="resolution" value="2.85 A"/>
    <property type="chains" value="G=1-396"/>
</dbReference>
<dbReference type="PDB" id="8CSU">
    <property type="method" value="EM"/>
    <property type="resolution" value="3.03 A"/>
    <property type="chains" value="G=1-396"/>
</dbReference>
<dbReference type="PDB" id="8K2A">
    <property type="method" value="EM"/>
    <property type="resolution" value="2.90 A"/>
    <property type="chains" value="SI=1-396"/>
</dbReference>
<dbReference type="PDB" id="8OIR">
    <property type="method" value="EM"/>
    <property type="resolution" value="3.10 A"/>
    <property type="chains" value="Ag=1-396"/>
</dbReference>
<dbReference type="PDB" id="8OIS">
    <property type="method" value="EM"/>
    <property type="resolution" value="3.00 A"/>
    <property type="chains" value="Ag=1-396"/>
</dbReference>
<dbReference type="PDB" id="8QRK">
    <property type="method" value="EM"/>
    <property type="resolution" value="6.69 A"/>
    <property type="chains" value="G=1-396"/>
</dbReference>
<dbReference type="PDB" id="8QRL">
    <property type="method" value="EM"/>
    <property type="resolution" value="3.34 A"/>
    <property type="chains" value="G=1-396"/>
</dbReference>
<dbReference type="PDB" id="8QRM">
    <property type="method" value="EM"/>
    <property type="resolution" value="3.05 A"/>
    <property type="chains" value="G=1-396"/>
</dbReference>
<dbReference type="PDB" id="8QRN">
    <property type="method" value="EM"/>
    <property type="resolution" value="2.98 A"/>
    <property type="chains" value="G=1-396"/>
</dbReference>
<dbReference type="PDB" id="8RRI">
    <property type="method" value="EM"/>
    <property type="resolution" value="2.40 A"/>
    <property type="chains" value="AG=1-396"/>
</dbReference>
<dbReference type="PDB" id="8XT0">
    <property type="method" value="EM"/>
    <property type="resolution" value="3.20 A"/>
    <property type="chains" value="SI=1-396"/>
</dbReference>
<dbReference type="PDB" id="8XT2">
    <property type="method" value="EM"/>
    <property type="resolution" value="3.30 A"/>
    <property type="chains" value="SI=1-396"/>
</dbReference>
<dbReference type="PDBsum" id="3J9M"/>
<dbReference type="PDBsum" id="6NU2"/>
<dbReference type="PDBsum" id="6NU3"/>
<dbReference type="PDBsum" id="6RW4"/>
<dbReference type="PDBsum" id="6RW5"/>
<dbReference type="PDBsum" id="6VLZ"/>
<dbReference type="PDBsum" id="6VMI"/>
<dbReference type="PDBsum" id="6ZM5"/>
<dbReference type="PDBsum" id="6ZM6"/>
<dbReference type="PDBsum" id="6ZS9"/>
<dbReference type="PDBsum" id="6ZSA"/>
<dbReference type="PDBsum" id="6ZSB"/>
<dbReference type="PDBsum" id="6ZSC"/>
<dbReference type="PDBsum" id="6ZSD"/>
<dbReference type="PDBsum" id="6ZSE"/>
<dbReference type="PDBsum" id="6ZSG"/>
<dbReference type="PDBsum" id="7A5F"/>
<dbReference type="PDBsum" id="7A5G"/>
<dbReference type="PDBsum" id="7A5I"/>
<dbReference type="PDBsum" id="7A5K"/>
<dbReference type="PDBsum" id="7L08"/>
<dbReference type="PDBsum" id="7OG4"/>
<dbReference type="PDBsum" id="7P2E"/>
<dbReference type="PDBsum" id="7PNX"/>
<dbReference type="PDBsum" id="7PNY"/>
<dbReference type="PDBsum" id="7PNZ"/>
<dbReference type="PDBsum" id="7PO0"/>
<dbReference type="PDBsum" id="7PO1"/>
<dbReference type="PDBsum" id="7PO2"/>
<dbReference type="PDBsum" id="7PO3"/>
<dbReference type="PDBsum" id="7QI4"/>
<dbReference type="PDBsum" id="7QI5"/>
<dbReference type="PDBsum" id="7QI6"/>
<dbReference type="PDBsum" id="8ANY"/>
<dbReference type="PDBsum" id="8CSP"/>
<dbReference type="PDBsum" id="8CSQ"/>
<dbReference type="PDBsum" id="8CSR"/>
<dbReference type="PDBsum" id="8CSS"/>
<dbReference type="PDBsum" id="8CST"/>
<dbReference type="PDBsum" id="8CSU"/>
<dbReference type="PDBsum" id="8K2A"/>
<dbReference type="PDBsum" id="8OIR"/>
<dbReference type="PDBsum" id="8OIS"/>
<dbReference type="PDBsum" id="8QRK"/>
<dbReference type="PDBsum" id="8QRL"/>
<dbReference type="PDBsum" id="8QRM"/>
<dbReference type="PDBsum" id="8QRN"/>
<dbReference type="PDBsum" id="8RRI"/>
<dbReference type="PDBsum" id="8XT0"/>
<dbReference type="PDBsum" id="8XT2"/>
<dbReference type="EMDB" id="EMD-0514"/>
<dbReference type="EMDB" id="EMD-0515"/>
<dbReference type="EMDB" id="EMD-10021"/>
<dbReference type="EMDB" id="EMD-10022"/>
<dbReference type="EMDB" id="EMD-11278"/>
<dbReference type="EMDB" id="EMD-11279"/>
<dbReference type="EMDB" id="EMD-11390"/>
<dbReference type="EMDB" id="EMD-11391"/>
<dbReference type="EMDB" id="EMD-11392"/>
<dbReference type="EMDB" id="EMD-11393"/>
<dbReference type="EMDB" id="EMD-11394"/>
<dbReference type="EMDB" id="EMD-11395"/>
<dbReference type="EMDB" id="EMD-11397"/>
<dbReference type="EMDB" id="EMD-11641"/>
<dbReference type="EMDB" id="EMD-11642"/>
<dbReference type="EMDB" id="EMD-11644"/>
<dbReference type="EMDB" id="EMD-11646"/>
<dbReference type="EMDB" id="EMD-12877"/>
<dbReference type="EMDB" id="EMD-13170"/>
<dbReference type="EMDB" id="EMD-13555"/>
<dbReference type="EMDB" id="EMD-13556"/>
<dbReference type="EMDB" id="EMD-13557"/>
<dbReference type="EMDB" id="EMD-13558"/>
<dbReference type="EMDB" id="EMD-13559"/>
<dbReference type="EMDB" id="EMD-13560"/>
<dbReference type="EMDB" id="EMD-13561"/>
<dbReference type="EMDB" id="EMD-13980"/>
<dbReference type="EMDB" id="EMD-13981"/>
<dbReference type="EMDB" id="EMD-13982"/>
<dbReference type="EMDB" id="EMD-15544"/>
<dbReference type="EMDB" id="EMD-16897"/>
<dbReference type="EMDB" id="EMD-16898"/>
<dbReference type="EMDB" id="EMD-19460"/>
<dbReference type="EMDB" id="EMD-21233"/>
<dbReference type="EMDB" id="EMD-21242"/>
<dbReference type="EMDB" id="EMD-23096"/>
<dbReference type="EMDB" id="EMD-26966"/>
<dbReference type="EMDB" id="EMD-26967"/>
<dbReference type="EMDB" id="EMD-26968"/>
<dbReference type="EMDB" id="EMD-26969"/>
<dbReference type="EMDB" id="EMD-26970"/>
<dbReference type="EMDB" id="EMD-26971"/>
<dbReference type="EMDB" id="EMD-36836"/>
<dbReference type="EMDB" id="EMD-38632"/>
<dbReference type="EMDB" id="EMD-38634"/>
<dbReference type="SMR" id="P82933"/>
<dbReference type="BioGRID" id="122360">
    <property type="interactions" value="400"/>
</dbReference>
<dbReference type="ComplexPortal" id="CPX-5225">
    <property type="entry name" value="28S mitochondrial small ribosomal subunit"/>
</dbReference>
<dbReference type="CORUM" id="P82933"/>
<dbReference type="FunCoup" id="P82933">
    <property type="interactions" value="2023"/>
</dbReference>
<dbReference type="IntAct" id="P82933">
    <property type="interactions" value="221"/>
</dbReference>
<dbReference type="MINT" id="P82933"/>
<dbReference type="STRING" id="9606.ENSP00000258455"/>
<dbReference type="GlyGen" id="P82933">
    <property type="glycosylation" value="1 site, 1 O-linked glycan (1 site)"/>
</dbReference>
<dbReference type="iPTMnet" id="P82933"/>
<dbReference type="PhosphoSitePlus" id="P82933"/>
<dbReference type="SwissPalm" id="P82933"/>
<dbReference type="BioMuta" id="MRPS9"/>
<dbReference type="DMDM" id="218511769"/>
<dbReference type="jPOST" id="P82933"/>
<dbReference type="MassIVE" id="P82933"/>
<dbReference type="PaxDb" id="9606-ENSP00000258455"/>
<dbReference type="PeptideAtlas" id="P82933"/>
<dbReference type="ProteomicsDB" id="57724"/>
<dbReference type="Pumba" id="P82933"/>
<dbReference type="TopDownProteomics" id="P82933"/>
<dbReference type="Antibodypedia" id="32981">
    <property type="antibodies" value="182 antibodies from 28 providers"/>
</dbReference>
<dbReference type="DNASU" id="64965"/>
<dbReference type="Ensembl" id="ENST00000258455.8">
    <property type="protein sequence ID" value="ENSP00000258455.3"/>
    <property type="gene ID" value="ENSG00000135972.9"/>
</dbReference>
<dbReference type="GeneID" id="64965"/>
<dbReference type="KEGG" id="hsa:64965"/>
<dbReference type="MANE-Select" id="ENST00000258455.8">
    <property type="protein sequence ID" value="ENSP00000258455.3"/>
    <property type="RefSeq nucleotide sequence ID" value="NM_182640.3"/>
    <property type="RefSeq protein sequence ID" value="NP_872578.1"/>
</dbReference>
<dbReference type="UCSC" id="uc002tcn.5">
    <property type="organism name" value="human"/>
</dbReference>
<dbReference type="AGR" id="HGNC:14501"/>
<dbReference type="CTD" id="64965"/>
<dbReference type="DisGeNET" id="64965"/>
<dbReference type="GeneCards" id="MRPS9"/>
<dbReference type="HGNC" id="HGNC:14501">
    <property type="gene designation" value="MRPS9"/>
</dbReference>
<dbReference type="HPA" id="ENSG00000135972">
    <property type="expression patterns" value="Low tissue specificity"/>
</dbReference>
<dbReference type="MIM" id="611975">
    <property type="type" value="gene"/>
</dbReference>
<dbReference type="neXtProt" id="NX_P82933"/>
<dbReference type="OpenTargets" id="ENSG00000135972"/>
<dbReference type="PharmGKB" id="PA31028"/>
<dbReference type="VEuPathDB" id="HostDB:ENSG00000135972"/>
<dbReference type="eggNOG" id="KOG1697">
    <property type="taxonomic scope" value="Eukaryota"/>
</dbReference>
<dbReference type="GeneTree" id="ENSGT00390000011204"/>
<dbReference type="HOGENOM" id="CLU_060546_1_0_1"/>
<dbReference type="InParanoid" id="P82933"/>
<dbReference type="OMA" id="HHFLFYT"/>
<dbReference type="OrthoDB" id="10254627at2759"/>
<dbReference type="PAN-GO" id="P82933">
    <property type="GO annotations" value="3 GO annotations based on evolutionary models"/>
</dbReference>
<dbReference type="PhylomeDB" id="P82933"/>
<dbReference type="TreeFam" id="TF106154"/>
<dbReference type="PathwayCommons" id="P82933"/>
<dbReference type="Reactome" id="R-HSA-5368286">
    <property type="pathway name" value="Mitochondrial translation initiation"/>
</dbReference>
<dbReference type="Reactome" id="R-HSA-5389840">
    <property type="pathway name" value="Mitochondrial translation elongation"/>
</dbReference>
<dbReference type="Reactome" id="R-HSA-5419276">
    <property type="pathway name" value="Mitochondrial translation termination"/>
</dbReference>
<dbReference type="SignaLink" id="P82933"/>
<dbReference type="SIGNOR" id="P82933"/>
<dbReference type="BioGRID-ORCS" id="64965">
    <property type="hits" value="293 hits in 1162 CRISPR screens"/>
</dbReference>
<dbReference type="CD-CODE" id="5965E019">
    <property type="entry name" value="mtRNA granule"/>
</dbReference>
<dbReference type="GenomeRNAi" id="64965"/>
<dbReference type="Pharos" id="P82933">
    <property type="development level" value="Tdark"/>
</dbReference>
<dbReference type="PRO" id="PR:P82933"/>
<dbReference type="Proteomes" id="UP000005640">
    <property type="component" value="Chromosome 2"/>
</dbReference>
<dbReference type="RNAct" id="P82933">
    <property type="molecule type" value="protein"/>
</dbReference>
<dbReference type="Bgee" id="ENSG00000135972">
    <property type="expression patterns" value="Expressed in left ventricle myocardium and 184 other cell types or tissues"/>
</dbReference>
<dbReference type="ExpressionAtlas" id="P82933">
    <property type="expression patterns" value="baseline and differential"/>
</dbReference>
<dbReference type="GO" id="GO:0005743">
    <property type="term" value="C:mitochondrial inner membrane"/>
    <property type="evidence" value="ECO:0000304"/>
    <property type="project" value="Reactome"/>
</dbReference>
<dbReference type="GO" id="GO:0005763">
    <property type="term" value="C:mitochondrial small ribosomal subunit"/>
    <property type="evidence" value="ECO:0000250"/>
    <property type="project" value="UniProtKB"/>
</dbReference>
<dbReference type="GO" id="GO:0005739">
    <property type="term" value="C:mitochondrion"/>
    <property type="evidence" value="ECO:0000314"/>
    <property type="project" value="HPA"/>
</dbReference>
<dbReference type="GO" id="GO:0005730">
    <property type="term" value="C:nucleolus"/>
    <property type="evidence" value="ECO:0000314"/>
    <property type="project" value="HPA"/>
</dbReference>
<dbReference type="GO" id="GO:0003723">
    <property type="term" value="F:RNA binding"/>
    <property type="evidence" value="ECO:0007005"/>
    <property type="project" value="UniProtKB"/>
</dbReference>
<dbReference type="GO" id="GO:0003735">
    <property type="term" value="F:structural constituent of ribosome"/>
    <property type="evidence" value="ECO:0000318"/>
    <property type="project" value="GO_Central"/>
</dbReference>
<dbReference type="GO" id="GO:0032543">
    <property type="term" value="P:mitochondrial translation"/>
    <property type="evidence" value="ECO:0000303"/>
    <property type="project" value="ComplexPortal"/>
</dbReference>
<dbReference type="FunFam" id="3.30.230.10:FF:000035">
    <property type="entry name" value="28S ribosomal protein S9, mitochondrial"/>
    <property type="match status" value="1"/>
</dbReference>
<dbReference type="Gene3D" id="3.30.230.10">
    <property type="match status" value="1"/>
</dbReference>
<dbReference type="InterPro" id="IPR020568">
    <property type="entry name" value="Ribosomal_Su5_D2-typ_SF"/>
</dbReference>
<dbReference type="InterPro" id="IPR000754">
    <property type="entry name" value="Ribosomal_uS9"/>
</dbReference>
<dbReference type="InterPro" id="IPR023035">
    <property type="entry name" value="Ribosomal_uS9_bac/plastid"/>
</dbReference>
<dbReference type="InterPro" id="IPR020574">
    <property type="entry name" value="Ribosomal_uS9_CS"/>
</dbReference>
<dbReference type="InterPro" id="IPR014721">
    <property type="entry name" value="Ribsml_uS5_D2-typ_fold_subgr"/>
</dbReference>
<dbReference type="NCBIfam" id="NF001099">
    <property type="entry name" value="PRK00132.1"/>
    <property type="match status" value="1"/>
</dbReference>
<dbReference type="PANTHER" id="PTHR21569">
    <property type="entry name" value="RIBOSOMAL PROTEIN S9"/>
    <property type="match status" value="1"/>
</dbReference>
<dbReference type="PANTHER" id="PTHR21569:SF1">
    <property type="entry name" value="SMALL RIBOSOMAL SUBUNIT PROTEIN US9M"/>
    <property type="match status" value="1"/>
</dbReference>
<dbReference type="Pfam" id="PF00380">
    <property type="entry name" value="Ribosomal_S9"/>
    <property type="match status" value="1"/>
</dbReference>
<dbReference type="SUPFAM" id="SSF54211">
    <property type="entry name" value="Ribosomal protein S5 domain 2-like"/>
    <property type="match status" value="1"/>
</dbReference>
<dbReference type="PROSITE" id="PS00360">
    <property type="entry name" value="RIBOSOMAL_S9"/>
    <property type="match status" value="1"/>
</dbReference>
<keyword id="KW-0002">3D-structure</keyword>
<keyword id="KW-0007">Acetylation</keyword>
<keyword id="KW-0496">Mitochondrion</keyword>
<keyword id="KW-1267">Proteomics identification</keyword>
<keyword id="KW-1185">Reference proteome</keyword>
<keyword id="KW-0687">Ribonucleoprotein</keyword>
<keyword id="KW-0689">Ribosomal protein</keyword>
<keyword id="KW-0809">Transit peptide</keyword>
<organism>
    <name type="scientific">Homo sapiens</name>
    <name type="common">Human</name>
    <dbReference type="NCBI Taxonomy" id="9606"/>
    <lineage>
        <taxon>Eukaryota</taxon>
        <taxon>Metazoa</taxon>
        <taxon>Chordata</taxon>
        <taxon>Craniata</taxon>
        <taxon>Vertebrata</taxon>
        <taxon>Euteleostomi</taxon>
        <taxon>Mammalia</taxon>
        <taxon>Eutheria</taxon>
        <taxon>Euarchontoglires</taxon>
        <taxon>Primates</taxon>
        <taxon>Haplorrhini</taxon>
        <taxon>Catarrhini</taxon>
        <taxon>Hominidae</taxon>
        <taxon>Homo</taxon>
    </lineage>
</organism>
<accession>P82933</accession>
<accession>Q6PG40</accession>
<comment type="subunit">
    <text evidence="3">Component of the mitochondrial small ribosomal subunit (mt-SSU). Mature mammalian 55S mitochondrial ribosomes consist of a small (28S) and a large (39S) subunit. The 28S small subunit contains a 12S ribosomal RNA (12S mt-rRNA) and 30 different proteins. The 39S large subunit contains a 16S rRNA (16S mt-rRNA), a copy of mitochondrial valine transfer RNA (mt-tRNA(Val)), which plays an integral structural role, and 52 different proteins.</text>
</comment>
<comment type="interaction">
    <interactant intactId="EBI-721385">
        <id>P82933</id>
    </interactant>
    <interactant intactId="EBI-711154">
        <id>Q9P287</id>
        <label>BCCIP</label>
    </interactant>
    <organismsDiffer>false</organismsDiffer>
    <experiments>3</experiments>
</comment>
<comment type="interaction">
    <interactant intactId="EBI-721385">
        <id>P82933</id>
    </interactant>
    <interactant intactId="EBI-6164309">
        <id>P04618</id>
        <label>rev</label>
    </interactant>
    <organismsDiffer>true</organismsDiffer>
    <experiments>2</experiments>
</comment>
<comment type="subcellular location">
    <subcellularLocation>
        <location evidence="3">Mitochondrion</location>
    </subcellularLocation>
</comment>
<comment type="similarity">
    <text evidence="5">Belongs to the universal ribosomal protein uS9 family.</text>
</comment>
<gene>
    <name type="primary">MRPS9</name>
    <name type="synonym">RPMS9</name>
</gene>
<feature type="transit peptide" description="Mitochondrion" evidence="1">
    <location>
        <begin position="1"/>
        <end status="unknown"/>
    </location>
</feature>
<feature type="chain" id="PRO_0000030655" description="Small ribosomal subunit protein uS9m">
    <location>
        <begin status="unknown"/>
        <end position="396"/>
    </location>
</feature>
<feature type="region of interest" description="Disordered" evidence="2">
    <location>
        <begin position="374"/>
        <end position="396"/>
    </location>
</feature>
<feature type="modified residue" description="N6-acetyllysine" evidence="7">
    <location>
        <position position="287"/>
    </location>
</feature>
<feature type="sequence variant" id="VAR_047902" description="In dbSNP:rs13399067.">
    <original>S</original>
    <variation>L</variation>
    <location>
        <position position="13"/>
    </location>
</feature>
<feature type="helix" evidence="8">
    <location>
        <begin position="71"/>
        <end position="92"/>
    </location>
</feature>
<feature type="helix" evidence="8">
    <location>
        <begin position="96"/>
        <end position="98"/>
    </location>
</feature>
<feature type="helix" evidence="8">
    <location>
        <begin position="101"/>
        <end position="111"/>
    </location>
</feature>
<feature type="helix" evidence="8">
    <location>
        <begin position="119"/>
        <end position="121"/>
    </location>
</feature>
<feature type="helix" evidence="8">
    <location>
        <begin position="128"/>
        <end position="131"/>
    </location>
</feature>
<feature type="strand" evidence="8">
    <location>
        <begin position="146"/>
        <end position="148"/>
    </location>
</feature>
<feature type="helix" evidence="8">
    <location>
        <begin position="151"/>
        <end position="153"/>
    </location>
</feature>
<feature type="helix" evidence="8">
    <location>
        <begin position="156"/>
        <end position="174"/>
    </location>
</feature>
<feature type="strand" evidence="8">
    <location>
        <begin position="197"/>
        <end position="199"/>
    </location>
</feature>
<feature type="helix" evidence="8">
    <location>
        <begin position="202"/>
        <end position="209"/>
    </location>
</feature>
<feature type="helix" evidence="8">
    <location>
        <begin position="215"/>
        <end position="230"/>
    </location>
</feature>
<feature type="helix" evidence="8">
    <location>
        <begin position="235"/>
        <end position="242"/>
    </location>
</feature>
<feature type="strand" evidence="8">
    <location>
        <begin position="245"/>
        <end position="247"/>
    </location>
</feature>
<feature type="strand" evidence="8">
    <location>
        <begin position="268"/>
        <end position="276"/>
    </location>
</feature>
<feature type="strand" evidence="8">
    <location>
        <begin position="279"/>
        <end position="288"/>
    </location>
</feature>
<feature type="strand" evidence="8">
    <location>
        <begin position="293"/>
        <end position="295"/>
    </location>
</feature>
<feature type="helix" evidence="8">
    <location>
        <begin position="300"/>
        <end position="303"/>
    </location>
</feature>
<feature type="helix" evidence="8">
    <location>
        <begin position="307"/>
        <end position="319"/>
    </location>
</feature>
<feature type="strand" evidence="8">
    <location>
        <begin position="328"/>
        <end position="335"/>
    </location>
</feature>
<feature type="helix" evidence="8">
    <location>
        <begin position="337"/>
        <end position="352"/>
    </location>
</feature>
<feature type="helix" evidence="8">
    <location>
        <begin position="353"/>
        <end position="355"/>
    </location>
</feature>
<feature type="helix" evidence="8">
    <location>
        <begin position="358"/>
        <end position="366"/>
    </location>
</feature>
<feature type="strand" evidence="8">
    <location>
        <begin position="369"/>
        <end position="371"/>
    </location>
</feature>
<feature type="strand" evidence="9">
    <location>
        <begin position="384"/>
        <end position="388"/>
    </location>
</feature>
<protein>
    <recommendedName>
        <fullName evidence="4">Small ribosomal subunit protein uS9m</fullName>
    </recommendedName>
    <alternativeName>
        <fullName>28S ribosomal protein S9, mitochondrial</fullName>
        <shortName>MRP-S9</shortName>
        <shortName>S9mt</shortName>
    </alternativeName>
</protein>
<sequence>MAAPCVSYGGAVSYRLLLWGRGSLARKQGLWKTAAPELQTNVRSQILRLRHTAFVIPKKNVPTSKRETYTEDFIKKQIEEFNIGKRHLANMMGEDPETFTQEDIDRAIAYLFPSGLFEKRARPVMKHPEQIFPRQRAIQWGEDGRPFHYLFYTGKQSYYSLMHDVYGMLLNLEKHQSHLQAKSLLPEKTVTRDVIGSRWLIKEELEEMLVEKLSDLDYMQFIRLLEKLLTSQCGAAEEEFVQRFRRSVTLESKKQLIEPVQYDEQGMAFSKSEGKRKTAKAEAIVYKHGSGRIKVNGIDYQLYFPITQDREQLMFPFHFVDRLGKHDVTCTVSGGGRSAQAGAIRLAMAKALCSFVTEDEVEWMRQAGLLTTDPRVRERKKPGQEGARRKFTWKKR</sequence>